<proteinExistence type="inferred from homology"/>
<keyword id="KW-0997">Cell inner membrane</keyword>
<keyword id="KW-1003">Cell membrane</keyword>
<keyword id="KW-0133">Cell shape</keyword>
<keyword id="KW-0238">DNA-binding</keyword>
<keyword id="KW-0472">Membrane</keyword>
<keyword id="KW-0735">Signal-anchor</keyword>
<keyword id="KW-0812">Transmembrane</keyword>
<keyword id="KW-1133">Transmembrane helix</keyword>
<comment type="function">
    <text evidence="1">Cytoskeletal protein that is involved in cell-shape control through regulation of the length of the long axis.</text>
</comment>
<comment type="subcellular location">
    <subcellularLocation>
        <location evidence="1">Cell inner membrane</location>
        <topology evidence="1">Single-pass type II membrane protein</topology>
    </subcellularLocation>
    <text evidence="1">Forms helical filaments along the long axis of the cell.</text>
</comment>
<comment type="domain">
    <text evidence="1">The helix-turn-helix (HTH) motif in the cytoplasmic domain of the N-terminus is involved in the formation of spirals to maintain the rigid rod shape. As this protein is anchored in the cytoplasmic membrane, the HTH motif may contribute to protein-protein interactions to form the RodZ helix, which is localized beneath the cytoplasmic membrane. The C-terminal domain may be critical for determination of the rod shape by probably interacting with enzymes required for synthesis of the peptidoglycan layer, including PBPs in the periplasm.</text>
</comment>
<comment type="similarity">
    <text evidence="1">Belongs to the RodZ family.</text>
</comment>
<name>RODZ_ECOLU</name>
<dbReference type="EMBL" id="CU928163">
    <property type="protein sequence ID" value="CAR14013.1"/>
    <property type="molecule type" value="Genomic_DNA"/>
</dbReference>
<dbReference type="RefSeq" id="WP_001090848.1">
    <property type="nucleotide sequence ID" value="NC_011751.1"/>
</dbReference>
<dbReference type="RefSeq" id="YP_002413538.1">
    <property type="nucleotide sequence ID" value="NC_011751.1"/>
</dbReference>
<dbReference type="SMR" id="B7N6A4"/>
<dbReference type="STRING" id="585056.ECUMN_2836"/>
<dbReference type="KEGG" id="eum:ECUMN_2836"/>
<dbReference type="PATRIC" id="fig|585056.7.peg.3021"/>
<dbReference type="HOGENOM" id="CLU_047530_3_1_6"/>
<dbReference type="Proteomes" id="UP000007097">
    <property type="component" value="Chromosome"/>
</dbReference>
<dbReference type="GO" id="GO:0005886">
    <property type="term" value="C:plasma membrane"/>
    <property type="evidence" value="ECO:0007669"/>
    <property type="project" value="UniProtKB-SubCell"/>
</dbReference>
<dbReference type="GO" id="GO:0003677">
    <property type="term" value="F:DNA binding"/>
    <property type="evidence" value="ECO:0007669"/>
    <property type="project" value="UniProtKB-KW"/>
</dbReference>
<dbReference type="GO" id="GO:0008360">
    <property type="term" value="P:regulation of cell shape"/>
    <property type="evidence" value="ECO:0007669"/>
    <property type="project" value="UniProtKB-UniRule"/>
</dbReference>
<dbReference type="CDD" id="cd00093">
    <property type="entry name" value="HTH_XRE"/>
    <property type="match status" value="1"/>
</dbReference>
<dbReference type="FunFam" id="1.10.260.40:FF:000014">
    <property type="entry name" value="Cytoskeleton protein RodZ"/>
    <property type="match status" value="1"/>
</dbReference>
<dbReference type="Gene3D" id="1.10.260.40">
    <property type="entry name" value="lambda repressor-like DNA-binding domains"/>
    <property type="match status" value="1"/>
</dbReference>
<dbReference type="HAMAP" id="MF_02017">
    <property type="entry name" value="RodZ"/>
    <property type="match status" value="1"/>
</dbReference>
<dbReference type="InterPro" id="IPR050400">
    <property type="entry name" value="Bact_Cytoskel_RodZ"/>
</dbReference>
<dbReference type="InterPro" id="IPR001387">
    <property type="entry name" value="Cro/C1-type_HTH"/>
</dbReference>
<dbReference type="InterPro" id="IPR010982">
    <property type="entry name" value="Lambda_DNA-bd_dom_sf"/>
</dbReference>
<dbReference type="InterPro" id="IPR023690">
    <property type="entry name" value="RodZ"/>
</dbReference>
<dbReference type="InterPro" id="IPR025194">
    <property type="entry name" value="RodZ-like_C"/>
</dbReference>
<dbReference type="NCBIfam" id="NF008109">
    <property type="entry name" value="PRK10856.1"/>
    <property type="match status" value="1"/>
</dbReference>
<dbReference type="PANTHER" id="PTHR34475">
    <property type="match status" value="1"/>
</dbReference>
<dbReference type="PANTHER" id="PTHR34475:SF1">
    <property type="entry name" value="CYTOSKELETON PROTEIN RODZ"/>
    <property type="match status" value="1"/>
</dbReference>
<dbReference type="Pfam" id="PF13413">
    <property type="entry name" value="HTH_25"/>
    <property type="match status" value="1"/>
</dbReference>
<dbReference type="Pfam" id="PF13464">
    <property type="entry name" value="RodZ_C"/>
    <property type="match status" value="1"/>
</dbReference>
<dbReference type="SMART" id="SM00530">
    <property type="entry name" value="HTH_XRE"/>
    <property type="match status" value="1"/>
</dbReference>
<dbReference type="SUPFAM" id="SSF47413">
    <property type="entry name" value="lambda repressor-like DNA-binding domains"/>
    <property type="match status" value="1"/>
</dbReference>
<dbReference type="PROSITE" id="PS50943">
    <property type="entry name" value="HTH_CROC1"/>
    <property type="match status" value="1"/>
</dbReference>
<feature type="chain" id="PRO_1000189542" description="Cytoskeleton protein RodZ">
    <location>
        <begin position="1"/>
        <end position="337"/>
    </location>
</feature>
<feature type="topological domain" description="Cytoplasmic" evidence="1">
    <location>
        <begin position="1"/>
        <end position="111"/>
    </location>
</feature>
<feature type="transmembrane region" description="Helical; Signal-anchor for type II membrane protein" evidence="1">
    <location>
        <begin position="112"/>
        <end position="132"/>
    </location>
</feature>
<feature type="topological domain" description="Periplasmic" evidence="1">
    <location>
        <begin position="133"/>
        <end position="337"/>
    </location>
</feature>
<feature type="domain" description="HTH cro/C1-type" evidence="1">
    <location>
        <begin position="19"/>
        <end position="71"/>
    </location>
</feature>
<feature type="DNA-binding region" description="H-T-H motif" evidence="1">
    <location>
        <begin position="30"/>
        <end position="49"/>
    </location>
</feature>
<feature type="region of interest" description="Disordered" evidence="2">
    <location>
        <begin position="145"/>
        <end position="220"/>
    </location>
</feature>
<feature type="compositionally biased region" description="Polar residues" evidence="2">
    <location>
        <begin position="145"/>
        <end position="167"/>
    </location>
</feature>
<feature type="compositionally biased region" description="Low complexity" evidence="2">
    <location>
        <begin position="168"/>
        <end position="207"/>
    </location>
</feature>
<feature type="compositionally biased region" description="Polar residues" evidence="2">
    <location>
        <begin position="208"/>
        <end position="218"/>
    </location>
</feature>
<sequence length="337" mass="36187">MNTEATHDQNEALTTGARLRNAREQLGLSQQAVAERLCLKVSTVRDIEEDKAPADLASTFLRGYIRSYARLVHIPEEELLPGLEKQAPLRAAKVAPMQSFSLGKRRKKRDGWLMTFTWLVLFVVIGLSGAWWWQDHKAQQEEITTMADQSSAELSSNSEQGQSVPLNTSTTTDPATTSTPPASVDTTATNTQTPAVTAPAPAVDPQQNAVVSPSQANVDTAATPAPTATITPDGAAPLPTDQAGVTTPAADPNALVMNFTADCWLEVTDATGKKLFSGMQRKDGNLNLTGQAPYKLKIGAPAAVQIQYQGKPVDLSRFIRTNQVARLTLNAEQSPAQ</sequence>
<organism>
    <name type="scientific">Escherichia coli O17:K52:H18 (strain UMN026 / ExPEC)</name>
    <dbReference type="NCBI Taxonomy" id="585056"/>
    <lineage>
        <taxon>Bacteria</taxon>
        <taxon>Pseudomonadati</taxon>
        <taxon>Pseudomonadota</taxon>
        <taxon>Gammaproteobacteria</taxon>
        <taxon>Enterobacterales</taxon>
        <taxon>Enterobacteriaceae</taxon>
        <taxon>Escherichia</taxon>
    </lineage>
</organism>
<gene>
    <name evidence="1" type="primary">rodZ</name>
    <name type="ordered locus">ECUMN_2836</name>
</gene>
<reference key="1">
    <citation type="journal article" date="2009" name="PLoS Genet.">
        <title>Organised genome dynamics in the Escherichia coli species results in highly diverse adaptive paths.</title>
        <authorList>
            <person name="Touchon M."/>
            <person name="Hoede C."/>
            <person name="Tenaillon O."/>
            <person name="Barbe V."/>
            <person name="Baeriswyl S."/>
            <person name="Bidet P."/>
            <person name="Bingen E."/>
            <person name="Bonacorsi S."/>
            <person name="Bouchier C."/>
            <person name="Bouvet O."/>
            <person name="Calteau A."/>
            <person name="Chiapello H."/>
            <person name="Clermont O."/>
            <person name="Cruveiller S."/>
            <person name="Danchin A."/>
            <person name="Diard M."/>
            <person name="Dossat C."/>
            <person name="Karoui M.E."/>
            <person name="Frapy E."/>
            <person name="Garry L."/>
            <person name="Ghigo J.M."/>
            <person name="Gilles A.M."/>
            <person name="Johnson J."/>
            <person name="Le Bouguenec C."/>
            <person name="Lescat M."/>
            <person name="Mangenot S."/>
            <person name="Martinez-Jehanne V."/>
            <person name="Matic I."/>
            <person name="Nassif X."/>
            <person name="Oztas S."/>
            <person name="Petit M.A."/>
            <person name="Pichon C."/>
            <person name="Rouy Z."/>
            <person name="Ruf C.S."/>
            <person name="Schneider D."/>
            <person name="Tourret J."/>
            <person name="Vacherie B."/>
            <person name="Vallenet D."/>
            <person name="Medigue C."/>
            <person name="Rocha E.P.C."/>
            <person name="Denamur E."/>
        </authorList>
    </citation>
    <scope>NUCLEOTIDE SEQUENCE [LARGE SCALE GENOMIC DNA]</scope>
    <source>
        <strain>UMN026 / ExPEC</strain>
    </source>
</reference>
<evidence type="ECO:0000255" key="1">
    <source>
        <dbReference type="HAMAP-Rule" id="MF_02017"/>
    </source>
</evidence>
<evidence type="ECO:0000256" key="2">
    <source>
        <dbReference type="SAM" id="MobiDB-lite"/>
    </source>
</evidence>
<accession>B7N6A4</accession>
<protein>
    <recommendedName>
        <fullName evidence="1">Cytoskeleton protein RodZ</fullName>
    </recommendedName>
</protein>